<feature type="chain" id="PRO_0000193436" description="Peptidyl-prolyl cis-trans isomerase NIMA-interacting 1">
    <location>
        <begin position="1"/>
        <end position="165"/>
    </location>
</feature>
<feature type="domain" description="WW" evidence="2">
    <location>
        <begin position="5"/>
        <end position="39"/>
    </location>
</feature>
<feature type="domain" description="PpiC" evidence="3">
    <location>
        <begin position="54"/>
        <end position="165"/>
    </location>
</feature>
<feature type="region of interest" description="Disordered" evidence="4">
    <location>
        <begin position="33"/>
        <end position="56"/>
    </location>
</feature>
<feature type="modified residue" description="N6-acetyllysine" evidence="1">
    <location>
        <position position="48"/>
    </location>
</feature>
<feature type="modified residue" description="Phosphoserine" evidence="8">
    <location>
        <position position="73"/>
    </location>
</feature>
<feature type="modified residue" description="Phosphoserine" evidence="1">
    <location>
        <position position="110"/>
    </location>
</feature>
<comment type="function">
    <text evidence="1 6 8">Peptidyl-prolyl cis/trans isomerase (PPIase) that binds to and isomerizes specific phosphorylated Ser/Thr-Pro (pSer/Thr-Pro) motifs (PubMed:29686383). By inducing conformational changes in a subset of phosphorylated proteins, acts as a molecular switch in multiple cellular processes. Displays a preference for an acidic residue N-terminal to the isomerized proline bond. Regulates mitosis presumably by interacting with NIMA and attenuating its mitosis-promoting activity. Down-regulates kinase activity of BTK. Can transactivate multiple oncogenes and induce centrosome amplification, chromosome instability and cell transformation. Required for the efficient dephosphorylation and recycling of RAF1 after mitogen activation (By similarity). Binds and targets PML and BCL6 for degradation in a phosphorylation-dependent manner (PubMed:17828269). Acts as a regulator of JNK cascade by binding to phosphorylated FBXW7, disrupting FBXW7 dimerization and promoting FBXW7 autoubiquitination and degradation: degradation of FBXW7 leads to subsequent stabilization of JUN (By similarity). May facilitate the ubiquitination and proteasomal degradation of RBBP8/CtIP through CUL3/KLHL15 E3 ubiquitin-protein ligase complex, hence favors DNA double-strand repair through error-prone non-homologous end joining (NHEJ) over error-free, RBBP8-mediated homologous recombination (HR) (By similarity). Upon IL33-induced lung inflammation, catalyzes cis-trans isomerization of phosphorylated IRAK3/IRAK-M, inducing IRAK3 stabilization, nuclear translocation and expression of pro-inflammatory genes in dendritic cells (PubMed:29686383). Catalyzes cis-trans isomerization of phosphorylated phosphoglycerate kinase PGK1 under hypoxic conditions to promote its binding to the TOM complex and targeting to the mitochondrion (By similarity).</text>
</comment>
<comment type="catalytic activity">
    <reaction evidence="8">
        <text>[protein]-peptidylproline (omega=180) = [protein]-peptidylproline (omega=0)</text>
        <dbReference type="Rhea" id="RHEA:16237"/>
        <dbReference type="Rhea" id="RHEA-COMP:10747"/>
        <dbReference type="Rhea" id="RHEA-COMP:10748"/>
        <dbReference type="ChEBI" id="CHEBI:83833"/>
        <dbReference type="ChEBI" id="CHEBI:83834"/>
        <dbReference type="EC" id="5.2.1.8"/>
    </reaction>
</comment>
<comment type="subunit">
    <text evidence="1 5 7 8">Interacts with STIL (PubMed:16024801). Interacts with KIF20B. Interacts with NEK6. Interacts (via WW domain) with PRKX (PubMed:19367327). Interacts with BTK. Interacts (via PpiC domain) with DAPK1. Interacts with the phosphorylated form of RAF1. Interacts (via WW domain) with ATCAY; upon NGF stimulation. Interacts with PML. Interacts with BCL6. Interacts with FBXW7, disrupting FBXW7 dimerization and promoting FBXW7 autoubiquitination and degradation (By similarity). Directly interacts with RBBP8/CtIP; this interaction depends upon RBBP8 phosphorylation (By similarity). Interacts (via WW domain) with IRAK3/IRAK-M (when phosphorylated at 'Ser-110') in response to IL33-mediated (but not TLR4 ligand LPS) dendritic cell stimulation (PubMed:29686383). Interacts with PGK1 (when phosphorylated at 'Ser-203'); the interaction is direct, occurs under hypoxic conditions, and targets PGK1 to the mitochondrion by promoting interactions with the TOM complex (By similarity).</text>
</comment>
<comment type="interaction">
    <interactant intactId="EBI-2432975">
        <id>Q9QUR7</id>
    </interactant>
    <interactant intactId="EBI-771218">
        <id>Q8BUV3</id>
        <label>Gphn</label>
    </interactant>
    <organismsDiffer>false</organismsDiffer>
    <experiments>6</experiments>
</comment>
<comment type="interaction">
    <interactant intactId="EBI-2432975">
        <id>Q9QUR7</id>
    </interactant>
    <interactant intactId="EBI-2312517">
        <id>Q80Z64</id>
        <label>Nanog</label>
    </interactant>
    <organismsDiffer>false</organismsDiffer>
    <experiments>2</experiments>
</comment>
<comment type="interaction">
    <interactant intactId="EBI-2432975">
        <id>Q9QUR7</id>
    </interactant>
    <interactant intactId="EBI-642563">
        <id>Q60795</id>
        <label>Nfe2l2</label>
    </interactant>
    <organismsDiffer>false</organismsDiffer>
    <experiments>3</experiments>
</comment>
<comment type="interaction">
    <interactant intactId="EBI-2432975">
        <id>Q9QUR7</id>
    </interactant>
    <interactant intactId="EBI-1392707">
        <id>Q01705</id>
        <label>Notch1</label>
    </interactant>
    <organismsDiffer>false</organismsDiffer>
    <experiments>3</experiments>
</comment>
<comment type="interaction">
    <interactant intactId="EBI-2432975">
        <id>Q9QUR7</id>
    </interactant>
    <interactant intactId="EBI-474016">
        <id>P02340</id>
        <label>Tp53</label>
    </interactant>
    <organismsDiffer>false</organismsDiffer>
    <experiments>3</experiments>
</comment>
<comment type="subcellular location">
    <subcellularLocation>
        <location evidence="8">Nucleus</location>
    </subcellularLocation>
    <subcellularLocation>
        <location evidence="1">Nucleus speckle</location>
    </subcellularLocation>
    <subcellularLocation>
        <location evidence="1">Cytoplasm</location>
    </subcellularLocation>
    <text evidence="1">Colocalizes with NEK6 in the nucleus. Mainly localized in the nucleus but phosphorylation at Ser-73 by DAPK1 results in inhibition of its nuclear localization.</text>
</comment>
<comment type="tissue specificity">
    <text evidence="8">Expressed in dendritic cells (at protein level).</text>
</comment>
<comment type="domain">
    <text>The WW domain is required for the interaction with STIL and KIF20B.</text>
</comment>
<comment type="PTM">
    <text evidence="1 8">Phosphorylation at Ser-73 by DAPK1 results in inhibition of its catalytic activity, nuclear localization, and its ability to induce centrosome amplification, chromosome instability and cell transformation (By similarity). Ser-73 is dephosphorylated upon IL33-stimulation of dendritic cells (PubMed:29686383).</text>
</comment>
<comment type="disruption phenotype">
    <text evidence="6 8">Animals display more and larger germinal centers (PubMed:17828269). In response to intranasal administration of IL33, lung inflammation is reduced compared to wild-type and is associated with low infiltration by inflammatory cells, especially granulocytes, a severe reduction in Th2-type cytokine secretion, including Il4, Il5 and Il13 in bronchial alveolar fluids, and reduced up-regulation of Il6, Csf3, Cxcl2 and Ccl5 mRNAs (PubMed:29686383). In addition, the increase in IRAK3/IRAK-M protein levels in infiltrated inflammatory cells is impaired (PubMed:29686383). In an ovalbumin-induced model of allergic asthma, causes reduced lung inflammation and, reduced Th2-type cytokine levels and inflammatory cell infiltration in bronchial alveolar fluids (PubMed:29686383).</text>
</comment>
<name>PIN1_MOUSE</name>
<dbReference type="EC" id="5.2.1.8" evidence="8"/>
<dbReference type="EMBL" id="AB009691">
    <property type="protein sequence ID" value="BAA87037.1"/>
    <property type="molecule type" value="mRNA"/>
</dbReference>
<dbReference type="EMBL" id="AB009692">
    <property type="protein sequence ID" value="BAA87038.1"/>
    <property type="molecule type" value="Genomic_DNA"/>
</dbReference>
<dbReference type="EMBL" id="AK002665">
    <property type="protein sequence ID" value="BAB22270.1"/>
    <property type="molecule type" value="mRNA"/>
</dbReference>
<dbReference type="EMBL" id="AK003369">
    <property type="protein sequence ID" value="BAB22743.1"/>
    <property type="molecule type" value="mRNA"/>
</dbReference>
<dbReference type="EMBL" id="AK054045">
    <property type="protein sequence ID" value="BAC35631.1"/>
    <property type="molecule type" value="mRNA"/>
</dbReference>
<dbReference type="EMBL" id="AK150652">
    <property type="protein sequence ID" value="BAE29739.1"/>
    <property type="molecule type" value="mRNA"/>
</dbReference>
<dbReference type="EMBL" id="AK160228">
    <property type="protein sequence ID" value="BAE35702.1"/>
    <property type="molecule type" value="mRNA"/>
</dbReference>
<dbReference type="EMBL" id="BC038254">
    <property type="protein sequence ID" value="AAH38254.1"/>
    <property type="molecule type" value="mRNA"/>
</dbReference>
<dbReference type="CCDS" id="CCDS22882.1"/>
<dbReference type="PIR" id="JC7136">
    <property type="entry name" value="JC7136"/>
</dbReference>
<dbReference type="RefSeq" id="NP_075860.1">
    <property type="nucleotide sequence ID" value="NM_023371.4"/>
</dbReference>
<dbReference type="BMRB" id="Q9QUR7"/>
<dbReference type="SMR" id="Q9QUR7"/>
<dbReference type="BioGRID" id="204839">
    <property type="interactions" value="29"/>
</dbReference>
<dbReference type="CORUM" id="Q9QUR7"/>
<dbReference type="DIP" id="DIP-44280N"/>
<dbReference type="ELM" id="Q9QUR7"/>
<dbReference type="FunCoup" id="Q9QUR7">
    <property type="interactions" value="2380"/>
</dbReference>
<dbReference type="IntAct" id="Q9QUR7">
    <property type="interactions" value="8"/>
</dbReference>
<dbReference type="MINT" id="Q9QUR7"/>
<dbReference type="STRING" id="10090.ENSMUSP00000034689"/>
<dbReference type="iPTMnet" id="Q9QUR7"/>
<dbReference type="PhosphoSitePlus" id="Q9QUR7"/>
<dbReference type="SwissPalm" id="Q9QUR7"/>
<dbReference type="CPTAC" id="non-CPTAC-3863"/>
<dbReference type="jPOST" id="Q9QUR7"/>
<dbReference type="PaxDb" id="10090-ENSMUSP00000034689"/>
<dbReference type="ProteomicsDB" id="289575"/>
<dbReference type="Pumba" id="Q9QUR7"/>
<dbReference type="ABCD" id="Q9QUR7">
    <property type="antibodies" value="21 sequenced antibodies"/>
</dbReference>
<dbReference type="DNASU" id="23988"/>
<dbReference type="Ensembl" id="ENSMUST00000034689.8">
    <property type="protein sequence ID" value="ENSMUSP00000034689.7"/>
    <property type="gene ID" value="ENSMUSG00000032171.8"/>
</dbReference>
<dbReference type="GeneID" id="23988"/>
<dbReference type="KEGG" id="mmu:23988"/>
<dbReference type="UCSC" id="uc009ojd.1">
    <property type="organism name" value="mouse"/>
</dbReference>
<dbReference type="AGR" id="MGI:1346036"/>
<dbReference type="CTD" id="5300"/>
<dbReference type="MGI" id="MGI:1346036">
    <property type="gene designation" value="Pin1"/>
</dbReference>
<dbReference type="VEuPathDB" id="HostDB:ENSMUSG00000032171"/>
<dbReference type="eggNOG" id="KOG3259">
    <property type="taxonomic scope" value="Eukaryota"/>
</dbReference>
<dbReference type="GeneTree" id="ENSGT00640000091578"/>
<dbReference type="HOGENOM" id="CLU_090028_0_1_1"/>
<dbReference type="InParanoid" id="Q9QUR7"/>
<dbReference type="OMA" id="DEVQCLH"/>
<dbReference type="OrthoDB" id="2530521at2759"/>
<dbReference type="PhylomeDB" id="Q9QUR7"/>
<dbReference type="TreeFam" id="TF101101"/>
<dbReference type="BRENDA" id="5.2.1.8">
    <property type="organism ID" value="3474"/>
</dbReference>
<dbReference type="Reactome" id="R-MMU-5668599">
    <property type="pathway name" value="RHO GTPases Activate NADPH Oxidases"/>
</dbReference>
<dbReference type="Reactome" id="R-MMU-6804756">
    <property type="pathway name" value="Regulation of TP53 Activity through Phosphorylation"/>
</dbReference>
<dbReference type="Reactome" id="R-MMU-6811555">
    <property type="pathway name" value="PI5P Regulates TP53 Acetylation"/>
</dbReference>
<dbReference type="Reactome" id="R-MMU-936440">
    <property type="pathway name" value="Negative regulators of DDX58/IFIH1 signaling"/>
</dbReference>
<dbReference type="BioGRID-ORCS" id="23988">
    <property type="hits" value="2 hits in 80 CRISPR screens"/>
</dbReference>
<dbReference type="PRO" id="PR:Q9QUR7"/>
<dbReference type="Proteomes" id="UP000000589">
    <property type="component" value="Chromosome 9"/>
</dbReference>
<dbReference type="RNAct" id="Q9QUR7">
    <property type="molecule type" value="protein"/>
</dbReference>
<dbReference type="Bgee" id="ENSMUSG00000032171">
    <property type="expression patterns" value="Expressed in primary motor cortex and 250 other cell types or tissues"/>
</dbReference>
<dbReference type="GO" id="GO:0005829">
    <property type="term" value="C:cytosol"/>
    <property type="evidence" value="ECO:0000314"/>
    <property type="project" value="ParkinsonsUK-UCL"/>
</dbReference>
<dbReference type="GO" id="GO:0098978">
    <property type="term" value="C:glutamatergic synapse"/>
    <property type="evidence" value="ECO:0000314"/>
    <property type="project" value="SynGO"/>
</dbReference>
<dbReference type="GO" id="GO:0030496">
    <property type="term" value="C:midbody"/>
    <property type="evidence" value="ECO:0000266"/>
    <property type="project" value="MGI"/>
</dbReference>
<dbReference type="GO" id="GO:0016607">
    <property type="term" value="C:nuclear speck"/>
    <property type="evidence" value="ECO:0007669"/>
    <property type="project" value="UniProtKB-SubCell"/>
</dbReference>
<dbReference type="GO" id="GO:0005634">
    <property type="term" value="C:nucleus"/>
    <property type="evidence" value="ECO:0000314"/>
    <property type="project" value="UniProtKB"/>
</dbReference>
<dbReference type="GO" id="GO:0098794">
    <property type="term" value="C:postsynapse"/>
    <property type="evidence" value="ECO:0007669"/>
    <property type="project" value="GOC"/>
</dbReference>
<dbReference type="GO" id="GO:0008013">
    <property type="term" value="F:beta-catenin binding"/>
    <property type="evidence" value="ECO:0000353"/>
    <property type="project" value="ParkinsonsUK-UCL"/>
</dbReference>
<dbReference type="GO" id="GO:0003774">
    <property type="term" value="F:cytoskeletal motor activity"/>
    <property type="evidence" value="ECO:0000315"/>
    <property type="project" value="ParkinsonsUK-UCL"/>
</dbReference>
<dbReference type="GO" id="GO:0003755">
    <property type="term" value="F:peptidyl-prolyl cis-trans isomerase activity"/>
    <property type="evidence" value="ECO:0000314"/>
    <property type="project" value="UniProtKB"/>
</dbReference>
<dbReference type="GO" id="GO:0051219">
    <property type="term" value="F:phosphoprotein binding"/>
    <property type="evidence" value="ECO:0000353"/>
    <property type="project" value="ARUK-UCL"/>
</dbReference>
<dbReference type="GO" id="GO:1902430">
    <property type="term" value="P:negative regulation of amyloid-beta formation"/>
    <property type="evidence" value="ECO:0000315"/>
    <property type="project" value="UniProtKB"/>
</dbReference>
<dbReference type="GO" id="GO:0030182">
    <property type="term" value="P:neuron differentiation"/>
    <property type="evidence" value="ECO:0000315"/>
    <property type="project" value="ParkinsonsUK-UCL"/>
</dbReference>
<dbReference type="GO" id="GO:0090263">
    <property type="term" value="P:positive regulation of canonical Wnt signaling pathway"/>
    <property type="evidence" value="ECO:0000305"/>
    <property type="project" value="ParkinsonsUK-UCL"/>
</dbReference>
<dbReference type="GO" id="GO:0000413">
    <property type="term" value="P:protein peptidyl-prolyl isomerization"/>
    <property type="evidence" value="ECO:0000314"/>
    <property type="project" value="UniProtKB"/>
</dbReference>
<dbReference type="GO" id="GO:0050821">
    <property type="term" value="P:protein stabilization"/>
    <property type="evidence" value="ECO:0000315"/>
    <property type="project" value="ParkinsonsUK-UCL"/>
</dbReference>
<dbReference type="GO" id="GO:0042127">
    <property type="term" value="P:regulation of cell population proliferation"/>
    <property type="evidence" value="ECO:0000315"/>
    <property type="project" value="MGI"/>
</dbReference>
<dbReference type="GO" id="GO:0032465">
    <property type="term" value="P:regulation of cytokinesis"/>
    <property type="evidence" value="ECO:0000315"/>
    <property type="project" value="MGI"/>
</dbReference>
<dbReference type="GO" id="GO:0031647">
    <property type="term" value="P:regulation of protein stability"/>
    <property type="evidence" value="ECO:0000250"/>
    <property type="project" value="UniProtKB"/>
</dbReference>
<dbReference type="GO" id="GO:0140252">
    <property type="term" value="P:regulation protein catabolic process at postsynapse"/>
    <property type="evidence" value="ECO:0000314"/>
    <property type="project" value="SynGO"/>
</dbReference>
<dbReference type="GO" id="GO:0001666">
    <property type="term" value="P:response to hypoxia"/>
    <property type="evidence" value="ECO:0000250"/>
    <property type="project" value="UniProtKB"/>
</dbReference>
<dbReference type="GO" id="GO:0050808">
    <property type="term" value="P:synapse organization"/>
    <property type="evidence" value="ECO:0000315"/>
    <property type="project" value="ParkinsonsUK-UCL"/>
</dbReference>
<dbReference type="CDD" id="cd00201">
    <property type="entry name" value="WW"/>
    <property type="match status" value="1"/>
</dbReference>
<dbReference type="FunFam" id="2.20.70.10:FF:000046">
    <property type="entry name" value="Peptidyl-prolyl cis-trans isomerase"/>
    <property type="match status" value="1"/>
</dbReference>
<dbReference type="FunFam" id="3.10.50.40:FF:000010">
    <property type="entry name" value="Peptidyl-prolyl cis-trans isomerase Pin1"/>
    <property type="match status" value="1"/>
</dbReference>
<dbReference type="Gene3D" id="2.20.70.10">
    <property type="match status" value="1"/>
</dbReference>
<dbReference type="Gene3D" id="3.10.50.40">
    <property type="match status" value="1"/>
</dbReference>
<dbReference type="InterPro" id="IPR046357">
    <property type="entry name" value="PPIase_dom_sf"/>
</dbReference>
<dbReference type="InterPro" id="IPR051370">
    <property type="entry name" value="PPIase_Pin1"/>
</dbReference>
<dbReference type="InterPro" id="IPR000297">
    <property type="entry name" value="PPIase_PpiC"/>
</dbReference>
<dbReference type="InterPro" id="IPR023058">
    <property type="entry name" value="PPIase_PpiC_CS"/>
</dbReference>
<dbReference type="InterPro" id="IPR001202">
    <property type="entry name" value="WW_dom"/>
</dbReference>
<dbReference type="InterPro" id="IPR036020">
    <property type="entry name" value="WW_dom_sf"/>
</dbReference>
<dbReference type="PANTHER" id="PTHR10657">
    <property type="entry name" value="PEPTIDYL-PROLYL CIS-TRANS ISOMERASE"/>
    <property type="match status" value="1"/>
</dbReference>
<dbReference type="PANTHER" id="PTHR10657:SF4">
    <property type="entry name" value="PEPTIDYL-PROLYL CIS-TRANS ISOMERASE-RELATED"/>
    <property type="match status" value="1"/>
</dbReference>
<dbReference type="Pfam" id="PF00639">
    <property type="entry name" value="Rotamase"/>
    <property type="match status" value="1"/>
</dbReference>
<dbReference type="Pfam" id="PF00397">
    <property type="entry name" value="WW"/>
    <property type="match status" value="1"/>
</dbReference>
<dbReference type="SMART" id="SM00456">
    <property type="entry name" value="WW"/>
    <property type="match status" value="1"/>
</dbReference>
<dbReference type="SUPFAM" id="SSF54534">
    <property type="entry name" value="FKBP-like"/>
    <property type="match status" value="1"/>
</dbReference>
<dbReference type="SUPFAM" id="SSF51045">
    <property type="entry name" value="WW domain"/>
    <property type="match status" value="1"/>
</dbReference>
<dbReference type="PROSITE" id="PS01096">
    <property type="entry name" value="PPIC_PPIASE_1"/>
    <property type="match status" value="1"/>
</dbReference>
<dbReference type="PROSITE" id="PS50198">
    <property type="entry name" value="PPIC_PPIASE_2"/>
    <property type="match status" value="1"/>
</dbReference>
<dbReference type="PROSITE" id="PS01159">
    <property type="entry name" value="WW_DOMAIN_1"/>
    <property type="match status" value="1"/>
</dbReference>
<dbReference type="PROSITE" id="PS50020">
    <property type="entry name" value="WW_DOMAIN_2"/>
    <property type="match status" value="1"/>
</dbReference>
<proteinExistence type="evidence at protein level"/>
<evidence type="ECO:0000250" key="1">
    <source>
        <dbReference type="UniProtKB" id="Q13526"/>
    </source>
</evidence>
<evidence type="ECO:0000255" key="2">
    <source>
        <dbReference type="PROSITE-ProRule" id="PRU00224"/>
    </source>
</evidence>
<evidence type="ECO:0000255" key="3">
    <source>
        <dbReference type="PROSITE-ProRule" id="PRU00278"/>
    </source>
</evidence>
<evidence type="ECO:0000256" key="4">
    <source>
        <dbReference type="SAM" id="MobiDB-lite"/>
    </source>
</evidence>
<evidence type="ECO:0000269" key="5">
    <source>
    </source>
</evidence>
<evidence type="ECO:0000269" key="6">
    <source>
    </source>
</evidence>
<evidence type="ECO:0000269" key="7">
    <source>
    </source>
</evidence>
<evidence type="ECO:0000269" key="8">
    <source>
    </source>
</evidence>
<organism>
    <name type="scientific">Mus musculus</name>
    <name type="common">Mouse</name>
    <dbReference type="NCBI Taxonomy" id="10090"/>
    <lineage>
        <taxon>Eukaryota</taxon>
        <taxon>Metazoa</taxon>
        <taxon>Chordata</taxon>
        <taxon>Craniata</taxon>
        <taxon>Vertebrata</taxon>
        <taxon>Euteleostomi</taxon>
        <taxon>Mammalia</taxon>
        <taxon>Eutheria</taxon>
        <taxon>Euarchontoglires</taxon>
        <taxon>Glires</taxon>
        <taxon>Rodentia</taxon>
        <taxon>Myomorpha</taxon>
        <taxon>Muroidea</taxon>
        <taxon>Muridae</taxon>
        <taxon>Murinae</taxon>
        <taxon>Mus</taxon>
        <taxon>Mus</taxon>
    </lineage>
</organism>
<accession>Q9QUR7</accession>
<accession>Q543B3</accession>
<reference key="1">
    <citation type="journal article" date="1999" name="Biochem. Biophys. Res. Commun.">
        <title>Mice lacking Pin1 develop normally, but are defective in entering cell cycle from G0 arrest.</title>
        <authorList>
            <person name="Fujimori F."/>
            <person name="Takahashi K."/>
            <person name="Uchida C."/>
            <person name="Uchida T."/>
        </authorList>
    </citation>
    <scope>NUCLEOTIDE SEQUENCE [GENOMIC DNA / MRNA]</scope>
</reference>
<reference key="2">
    <citation type="journal article" date="2005" name="Science">
        <title>The transcriptional landscape of the mammalian genome.</title>
        <authorList>
            <person name="Carninci P."/>
            <person name="Kasukawa T."/>
            <person name="Katayama S."/>
            <person name="Gough J."/>
            <person name="Frith M.C."/>
            <person name="Maeda N."/>
            <person name="Oyama R."/>
            <person name="Ravasi T."/>
            <person name="Lenhard B."/>
            <person name="Wells C."/>
            <person name="Kodzius R."/>
            <person name="Shimokawa K."/>
            <person name="Bajic V.B."/>
            <person name="Brenner S.E."/>
            <person name="Batalov S."/>
            <person name="Forrest A.R."/>
            <person name="Zavolan M."/>
            <person name="Davis M.J."/>
            <person name="Wilming L.G."/>
            <person name="Aidinis V."/>
            <person name="Allen J.E."/>
            <person name="Ambesi-Impiombato A."/>
            <person name="Apweiler R."/>
            <person name="Aturaliya R.N."/>
            <person name="Bailey T.L."/>
            <person name="Bansal M."/>
            <person name="Baxter L."/>
            <person name="Beisel K.W."/>
            <person name="Bersano T."/>
            <person name="Bono H."/>
            <person name="Chalk A.M."/>
            <person name="Chiu K.P."/>
            <person name="Choudhary V."/>
            <person name="Christoffels A."/>
            <person name="Clutterbuck D.R."/>
            <person name="Crowe M.L."/>
            <person name="Dalla E."/>
            <person name="Dalrymple B.P."/>
            <person name="de Bono B."/>
            <person name="Della Gatta G."/>
            <person name="di Bernardo D."/>
            <person name="Down T."/>
            <person name="Engstrom P."/>
            <person name="Fagiolini M."/>
            <person name="Faulkner G."/>
            <person name="Fletcher C.F."/>
            <person name="Fukushima T."/>
            <person name="Furuno M."/>
            <person name="Futaki S."/>
            <person name="Gariboldi M."/>
            <person name="Georgii-Hemming P."/>
            <person name="Gingeras T.R."/>
            <person name="Gojobori T."/>
            <person name="Green R.E."/>
            <person name="Gustincich S."/>
            <person name="Harbers M."/>
            <person name="Hayashi Y."/>
            <person name="Hensch T.K."/>
            <person name="Hirokawa N."/>
            <person name="Hill D."/>
            <person name="Huminiecki L."/>
            <person name="Iacono M."/>
            <person name="Ikeo K."/>
            <person name="Iwama A."/>
            <person name="Ishikawa T."/>
            <person name="Jakt M."/>
            <person name="Kanapin A."/>
            <person name="Katoh M."/>
            <person name="Kawasawa Y."/>
            <person name="Kelso J."/>
            <person name="Kitamura H."/>
            <person name="Kitano H."/>
            <person name="Kollias G."/>
            <person name="Krishnan S.P."/>
            <person name="Kruger A."/>
            <person name="Kummerfeld S.K."/>
            <person name="Kurochkin I.V."/>
            <person name="Lareau L.F."/>
            <person name="Lazarevic D."/>
            <person name="Lipovich L."/>
            <person name="Liu J."/>
            <person name="Liuni S."/>
            <person name="McWilliam S."/>
            <person name="Madan Babu M."/>
            <person name="Madera M."/>
            <person name="Marchionni L."/>
            <person name="Matsuda H."/>
            <person name="Matsuzawa S."/>
            <person name="Miki H."/>
            <person name="Mignone F."/>
            <person name="Miyake S."/>
            <person name="Morris K."/>
            <person name="Mottagui-Tabar S."/>
            <person name="Mulder N."/>
            <person name="Nakano N."/>
            <person name="Nakauchi H."/>
            <person name="Ng P."/>
            <person name="Nilsson R."/>
            <person name="Nishiguchi S."/>
            <person name="Nishikawa S."/>
            <person name="Nori F."/>
            <person name="Ohara O."/>
            <person name="Okazaki Y."/>
            <person name="Orlando V."/>
            <person name="Pang K.C."/>
            <person name="Pavan W.J."/>
            <person name="Pavesi G."/>
            <person name="Pesole G."/>
            <person name="Petrovsky N."/>
            <person name="Piazza S."/>
            <person name="Reed J."/>
            <person name="Reid J.F."/>
            <person name="Ring B.Z."/>
            <person name="Ringwald M."/>
            <person name="Rost B."/>
            <person name="Ruan Y."/>
            <person name="Salzberg S.L."/>
            <person name="Sandelin A."/>
            <person name="Schneider C."/>
            <person name="Schoenbach C."/>
            <person name="Sekiguchi K."/>
            <person name="Semple C.A."/>
            <person name="Seno S."/>
            <person name="Sessa L."/>
            <person name="Sheng Y."/>
            <person name="Shibata Y."/>
            <person name="Shimada H."/>
            <person name="Shimada K."/>
            <person name="Silva D."/>
            <person name="Sinclair B."/>
            <person name="Sperling S."/>
            <person name="Stupka E."/>
            <person name="Sugiura K."/>
            <person name="Sultana R."/>
            <person name="Takenaka Y."/>
            <person name="Taki K."/>
            <person name="Tammoja K."/>
            <person name="Tan S.L."/>
            <person name="Tang S."/>
            <person name="Taylor M.S."/>
            <person name="Tegner J."/>
            <person name="Teichmann S.A."/>
            <person name="Ueda H.R."/>
            <person name="van Nimwegen E."/>
            <person name="Verardo R."/>
            <person name="Wei C.L."/>
            <person name="Yagi K."/>
            <person name="Yamanishi H."/>
            <person name="Zabarovsky E."/>
            <person name="Zhu S."/>
            <person name="Zimmer A."/>
            <person name="Hide W."/>
            <person name="Bult C."/>
            <person name="Grimmond S.M."/>
            <person name="Teasdale R.D."/>
            <person name="Liu E.T."/>
            <person name="Brusic V."/>
            <person name="Quackenbush J."/>
            <person name="Wahlestedt C."/>
            <person name="Mattick J.S."/>
            <person name="Hume D.A."/>
            <person name="Kai C."/>
            <person name="Sasaki D."/>
            <person name="Tomaru Y."/>
            <person name="Fukuda S."/>
            <person name="Kanamori-Katayama M."/>
            <person name="Suzuki M."/>
            <person name="Aoki J."/>
            <person name="Arakawa T."/>
            <person name="Iida J."/>
            <person name="Imamura K."/>
            <person name="Itoh M."/>
            <person name="Kato T."/>
            <person name="Kawaji H."/>
            <person name="Kawagashira N."/>
            <person name="Kawashima T."/>
            <person name="Kojima M."/>
            <person name="Kondo S."/>
            <person name="Konno H."/>
            <person name="Nakano K."/>
            <person name="Ninomiya N."/>
            <person name="Nishio T."/>
            <person name="Okada M."/>
            <person name="Plessy C."/>
            <person name="Shibata K."/>
            <person name="Shiraki T."/>
            <person name="Suzuki S."/>
            <person name="Tagami M."/>
            <person name="Waki K."/>
            <person name="Watahiki A."/>
            <person name="Okamura-Oho Y."/>
            <person name="Suzuki H."/>
            <person name="Kawai J."/>
            <person name="Hayashizaki Y."/>
        </authorList>
    </citation>
    <scope>NUCLEOTIDE SEQUENCE [LARGE SCALE MRNA]</scope>
    <source>
        <strain>C57BL/6J</strain>
        <tissue>Bone marrow</tissue>
        <tissue>Embryo</tissue>
        <tissue>Kidney</tissue>
        <tissue>Oviduct</tissue>
    </source>
</reference>
<reference key="3">
    <citation type="journal article" date="2004" name="Genome Res.">
        <title>The status, quality, and expansion of the NIH full-length cDNA project: the Mammalian Gene Collection (MGC).</title>
        <authorList>
            <consortium name="The MGC Project Team"/>
        </authorList>
    </citation>
    <scope>NUCLEOTIDE SEQUENCE [LARGE SCALE MRNA]</scope>
    <source>
        <strain>FVB/N</strain>
        <tissue>Kidney</tissue>
    </source>
</reference>
<reference key="4">
    <citation type="journal article" date="2005" name="Mol. Cell. Biol.">
        <title>Sil phosphorylation in a Pin1 binding domain affects the duration of the spindle checkpoint.</title>
        <authorList>
            <person name="Campaner S."/>
            <person name="Kaldis P."/>
            <person name="Izraeli S."/>
            <person name="Kirsch I.R."/>
        </authorList>
    </citation>
    <scope>INTERACTION WITH STIL</scope>
</reference>
<reference key="5">
    <citation type="journal article" date="2007" name="Nat. Immunol.">
        <title>Genotoxic stress regulates expression of the proto-oncogene Bcl6 in germinal center B cells.</title>
        <authorList>
            <person name="Phan R.T."/>
            <person name="Saito M."/>
            <person name="Kitagawa Y."/>
            <person name="Means A.R."/>
            <person name="Dalla-Favera R."/>
        </authorList>
    </citation>
    <scope>FUNCTION IN BCL6 STABILITY</scope>
    <scope>DISRUPTION PHENOTYPE</scope>
</reference>
<reference key="6">
    <citation type="journal article" date="2009" name="Kidney Int.">
        <title>Protein kinase-X interacts with Pin-1 and Polycystin-1 during mouse kidney development.</title>
        <authorList>
            <person name="Li X."/>
            <person name="Hyink D.P."/>
            <person name="Radbill B."/>
            <person name="Sudol M."/>
            <person name="Zhang H."/>
            <person name="Zheleznova N.N."/>
            <person name="Wilson P.D."/>
        </authorList>
    </citation>
    <scope>INTERACTION WITH PRKX</scope>
</reference>
<reference key="7">
    <citation type="journal article" date="2010" name="Cell">
        <title>A tissue-specific atlas of mouse protein phosphorylation and expression.</title>
        <authorList>
            <person name="Huttlin E.L."/>
            <person name="Jedrychowski M.P."/>
            <person name="Elias J.E."/>
            <person name="Goswami T."/>
            <person name="Rad R."/>
            <person name="Beausoleil S.A."/>
            <person name="Villen J."/>
            <person name="Haas W."/>
            <person name="Sowa M.E."/>
            <person name="Gygi S.P."/>
        </authorList>
    </citation>
    <scope>IDENTIFICATION BY MASS SPECTROMETRY [LARGE SCALE ANALYSIS]</scope>
    <source>
        <tissue>Brain</tissue>
        <tissue>Heart</tissue>
        <tissue>Kidney</tissue>
        <tissue>Liver</tissue>
        <tissue>Lung</tissue>
        <tissue>Spleen</tissue>
        <tissue>Testis</tissue>
    </source>
</reference>
<reference key="8">
    <citation type="journal article" date="2018" name="Nat. Commun.">
        <title>The IL-33-PIN1-IRAK-M axis is critical for type 2 immunity in IL-33-induced allergic airway inflammation.</title>
        <authorList>
            <person name="Nechama M."/>
            <person name="Kwon J."/>
            <person name="Wei S."/>
            <person name="Kyi A.T."/>
            <person name="Welner R.S."/>
            <person name="Ben-Dov I.Z."/>
            <person name="Arredouani M.S."/>
            <person name="Asara J.M."/>
            <person name="Chen C.H."/>
            <person name="Tsai C.Y."/>
            <person name="Nelson K.F."/>
            <person name="Kobayashi K.S."/>
            <person name="Israel E."/>
            <person name="Zhou X.Z."/>
            <person name="Nicholson L.K."/>
            <person name="Lu K.P."/>
        </authorList>
    </citation>
    <scope>FUNCTION</scope>
    <scope>CATALYTIC ACTIVITY</scope>
    <scope>INTERACTION WITH IRAK3</scope>
    <scope>SUBCELLULAR LOCATION</scope>
    <scope>TISSUE SPECIFICITY</scope>
    <scope>PHOSPHORYLATION AT SER-73</scope>
    <scope>DISRUPTION PHENOTYPE</scope>
</reference>
<protein>
    <recommendedName>
        <fullName>Peptidyl-prolyl cis-trans isomerase NIMA-interacting 1</fullName>
        <ecNumber evidence="8">5.2.1.8</ecNumber>
    </recommendedName>
    <alternativeName>
        <fullName>Peptidyl-prolyl cis-trans isomerase Pin1</fullName>
        <shortName>PPIase Pin1</shortName>
    </alternativeName>
</protein>
<gene>
    <name type="primary">Pin1</name>
</gene>
<keyword id="KW-0007">Acetylation</keyword>
<keyword id="KW-0131">Cell cycle</keyword>
<keyword id="KW-0963">Cytoplasm</keyword>
<keyword id="KW-0413">Isomerase</keyword>
<keyword id="KW-0539">Nucleus</keyword>
<keyword id="KW-0597">Phosphoprotein</keyword>
<keyword id="KW-1185">Reference proteome</keyword>
<keyword id="KW-0697">Rotamase</keyword>
<sequence length="165" mass="18370">MADEEKLPPGWEKRMSRSSGRVYYFNHITNASQWERPSGGSTVGGSSKNGQGEPAKVRCSHLLVKHSQSRRPSSWRQEKITRSKEEALELINGYIQKIKSGEEDFESLASQFSDCSSAKARGDLGPFSRGQMQKPFEDASFALRTGEMSGPVFTDSGIHIILRTE</sequence>